<proteinExistence type="uncertain"/>
<sequence>MIAPSPKSSEEEGQKDEEVLQGEQGDFNDNDTEPENLGHRPLLMDSEDEEEEEKRSSDSDYEQAKAKYSDMSPVYRDKSGSGPTQDINTILLTSAQLSSDVGVETPKQEFDIFGAVPFFAVCAQQPQQEKNEKSLPQHRFPATGLQQEEFDVFTKAPFSKKVNVQECHAVGPETHPKSIDIFDFTPFQPFLTSTSKSESNEDLFGLVPFEEIMGSQQQKVKQRSLQKLSSRQRRTKQDMSKSNGKRHHGTPTSKKKTLKPTYRTPERARRHKKVGRRVSQTSNEFVTISDSKENIGAAVTDGNDRGNVLQLEESLLDPFGAKPFHPPDLSWHPLHQGLNDIRADHNTVLPKQPRQNSLHGSFHSADVLTMDDFGAMPFTELVVQSITLQQSQQSQPVELDPFGAAPFPSKQ</sequence>
<organism>
    <name type="scientific">Homo sapiens</name>
    <name type="common">Human</name>
    <dbReference type="NCBI Taxonomy" id="9606"/>
    <lineage>
        <taxon>Eukaryota</taxon>
        <taxon>Metazoa</taxon>
        <taxon>Chordata</taxon>
        <taxon>Craniata</taxon>
        <taxon>Vertebrata</taxon>
        <taxon>Euteleostomi</taxon>
        <taxon>Mammalia</taxon>
        <taxon>Eutheria</taxon>
        <taxon>Euarchontoglires</taxon>
        <taxon>Primates</taxon>
        <taxon>Haplorrhini</taxon>
        <taxon>Catarrhini</taxon>
        <taxon>Hominidae</taxon>
        <taxon>Homo</taxon>
    </lineage>
</organism>
<gene>
    <name type="primary">BMP2KL</name>
</gene>
<dbReference type="EMBL" id="Z83843">
    <property type="status" value="NOT_ANNOTATED_CDS"/>
    <property type="molecule type" value="Genomic_DNA"/>
</dbReference>
<dbReference type="GlyGen" id="Q5H9B9">
    <property type="glycosylation" value="1 site"/>
</dbReference>
<dbReference type="iPTMnet" id="Q5H9B9"/>
<dbReference type="PhosphoSitePlus" id="Q5H9B9"/>
<dbReference type="BioMuta" id="HGNC:17080"/>
<dbReference type="DMDM" id="187470879"/>
<dbReference type="jPOST" id="Q5H9B9"/>
<dbReference type="MassIVE" id="Q5H9B9"/>
<dbReference type="PeptideAtlas" id="Q5H9B9"/>
<dbReference type="ProteomicsDB" id="62879"/>
<dbReference type="AGR" id="HGNC:17080"/>
<dbReference type="GeneCards" id="BMP2KL"/>
<dbReference type="HGNC" id="HGNC:17080">
    <property type="gene designation" value="BMP2KL"/>
</dbReference>
<dbReference type="neXtProt" id="NX_Q5H9B9"/>
<dbReference type="InParanoid" id="Q5H9B9"/>
<dbReference type="PAN-GO" id="Q5H9B9">
    <property type="GO annotations" value="0 GO annotations based on evolutionary models"/>
</dbReference>
<dbReference type="PhylomeDB" id="Q5H9B9"/>
<dbReference type="Pharos" id="Q5H9B9">
    <property type="development level" value="Tdark"/>
</dbReference>
<dbReference type="Proteomes" id="UP000005640">
    <property type="component" value="Unplaced"/>
</dbReference>
<dbReference type="RNAct" id="Q5H9B9">
    <property type="molecule type" value="protein"/>
</dbReference>
<dbReference type="InterPro" id="IPR051744">
    <property type="entry name" value="AP2_assoc_SerThr_kinase"/>
</dbReference>
<dbReference type="InterPro" id="IPR028182">
    <property type="entry name" value="BMP2K_C"/>
</dbReference>
<dbReference type="PANTHER" id="PTHR47907:SF4">
    <property type="entry name" value="BMP-2-INDUCIBLE PROTEIN KINASE ISOFORM X1"/>
    <property type="match status" value="1"/>
</dbReference>
<dbReference type="PANTHER" id="PTHR47907">
    <property type="entry name" value="PROTEIN KINASE DOMAIN-CONTAINING PROTEIN"/>
    <property type="match status" value="1"/>
</dbReference>
<dbReference type="Pfam" id="PF15282">
    <property type="entry name" value="BMP2K_C"/>
    <property type="match status" value="1"/>
</dbReference>
<protein>
    <recommendedName>
        <fullName>Putative BMP-2-inducible kinase-like protein</fullName>
    </recommendedName>
</protein>
<evidence type="ECO:0000255" key="1"/>
<evidence type="ECO:0000256" key="2">
    <source>
        <dbReference type="SAM" id="MobiDB-lite"/>
    </source>
</evidence>
<evidence type="ECO:0000305" key="3"/>
<accession>Q5H9B9</accession>
<keyword id="KW-0175">Coiled coil</keyword>
<keyword id="KW-1185">Reference proteome</keyword>
<comment type="caution">
    <text evidence="3">Could be the product of a pseudogene.</text>
</comment>
<feature type="chain" id="PRO_0000331579" description="Putative BMP-2-inducible kinase-like protein">
    <location>
        <begin position="1"/>
        <end position="411"/>
    </location>
</feature>
<feature type="region of interest" description="Disordered" evidence="2">
    <location>
        <begin position="1"/>
        <end position="87"/>
    </location>
</feature>
<feature type="region of interest" description="Disordered" evidence="2">
    <location>
        <begin position="215"/>
        <end position="280"/>
    </location>
</feature>
<feature type="region of interest" description="Disordered" evidence="2">
    <location>
        <begin position="392"/>
        <end position="411"/>
    </location>
</feature>
<feature type="coiled-coil region" evidence="1">
    <location>
        <begin position="47"/>
        <end position="71"/>
    </location>
</feature>
<feature type="compositionally biased region" description="Basic and acidic residues" evidence="2">
    <location>
        <begin position="8"/>
        <end position="18"/>
    </location>
</feature>
<feature type="compositionally biased region" description="Basic and acidic residues" evidence="2">
    <location>
        <begin position="53"/>
        <end position="68"/>
    </location>
</feature>
<feature type="compositionally biased region" description="Basic residues" evidence="2">
    <location>
        <begin position="220"/>
        <end position="234"/>
    </location>
</feature>
<feature type="compositionally biased region" description="Basic residues" evidence="2">
    <location>
        <begin position="243"/>
        <end position="258"/>
    </location>
</feature>
<reference key="1">
    <citation type="journal article" date="2005" name="Nature">
        <title>The DNA sequence of the human X chromosome.</title>
        <authorList>
            <person name="Ross M.T."/>
            <person name="Grafham D.V."/>
            <person name="Coffey A.J."/>
            <person name="Scherer S."/>
            <person name="McLay K."/>
            <person name="Muzny D."/>
            <person name="Platzer M."/>
            <person name="Howell G.R."/>
            <person name="Burrows C."/>
            <person name="Bird C.P."/>
            <person name="Frankish A."/>
            <person name="Lovell F.L."/>
            <person name="Howe K.L."/>
            <person name="Ashurst J.L."/>
            <person name="Fulton R.S."/>
            <person name="Sudbrak R."/>
            <person name="Wen G."/>
            <person name="Jones M.C."/>
            <person name="Hurles M.E."/>
            <person name="Andrews T.D."/>
            <person name="Scott C.E."/>
            <person name="Searle S."/>
            <person name="Ramser J."/>
            <person name="Whittaker A."/>
            <person name="Deadman R."/>
            <person name="Carter N.P."/>
            <person name="Hunt S.E."/>
            <person name="Chen R."/>
            <person name="Cree A."/>
            <person name="Gunaratne P."/>
            <person name="Havlak P."/>
            <person name="Hodgson A."/>
            <person name="Metzker M.L."/>
            <person name="Richards S."/>
            <person name="Scott G."/>
            <person name="Steffen D."/>
            <person name="Sodergren E."/>
            <person name="Wheeler D.A."/>
            <person name="Worley K.C."/>
            <person name="Ainscough R."/>
            <person name="Ambrose K.D."/>
            <person name="Ansari-Lari M.A."/>
            <person name="Aradhya S."/>
            <person name="Ashwell R.I."/>
            <person name="Babbage A.K."/>
            <person name="Bagguley C.L."/>
            <person name="Ballabio A."/>
            <person name="Banerjee R."/>
            <person name="Barker G.E."/>
            <person name="Barlow K.F."/>
            <person name="Barrett I.P."/>
            <person name="Bates K.N."/>
            <person name="Beare D.M."/>
            <person name="Beasley H."/>
            <person name="Beasley O."/>
            <person name="Beck A."/>
            <person name="Bethel G."/>
            <person name="Blechschmidt K."/>
            <person name="Brady N."/>
            <person name="Bray-Allen S."/>
            <person name="Bridgeman A.M."/>
            <person name="Brown A.J."/>
            <person name="Brown M.J."/>
            <person name="Bonnin D."/>
            <person name="Bruford E.A."/>
            <person name="Buhay C."/>
            <person name="Burch P."/>
            <person name="Burford D."/>
            <person name="Burgess J."/>
            <person name="Burrill W."/>
            <person name="Burton J."/>
            <person name="Bye J.M."/>
            <person name="Carder C."/>
            <person name="Carrel L."/>
            <person name="Chako J."/>
            <person name="Chapman J.C."/>
            <person name="Chavez D."/>
            <person name="Chen E."/>
            <person name="Chen G."/>
            <person name="Chen Y."/>
            <person name="Chen Z."/>
            <person name="Chinault C."/>
            <person name="Ciccodicola A."/>
            <person name="Clark S.Y."/>
            <person name="Clarke G."/>
            <person name="Clee C.M."/>
            <person name="Clegg S."/>
            <person name="Clerc-Blankenburg K."/>
            <person name="Clifford K."/>
            <person name="Cobley V."/>
            <person name="Cole C.G."/>
            <person name="Conquer J.S."/>
            <person name="Corby N."/>
            <person name="Connor R.E."/>
            <person name="David R."/>
            <person name="Davies J."/>
            <person name="Davis C."/>
            <person name="Davis J."/>
            <person name="Delgado O."/>
            <person name="Deshazo D."/>
            <person name="Dhami P."/>
            <person name="Ding Y."/>
            <person name="Dinh H."/>
            <person name="Dodsworth S."/>
            <person name="Draper H."/>
            <person name="Dugan-Rocha S."/>
            <person name="Dunham A."/>
            <person name="Dunn M."/>
            <person name="Durbin K.J."/>
            <person name="Dutta I."/>
            <person name="Eades T."/>
            <person name="Ellwood M."/>
            <person name="Emery-Cohen A."/>
            <person name="Errington H."/>
            <person name="Evans K.L."/>
            <person name="Faulkner L."/>
            <person name="Francis F."/>
            <person name="Frankland J."/>
            <person name="Fraser A.E."/>
            <person name="Galgoczy P."/>
            <person name="Gilbert J."/>
            <person name="Gill R."/>
            <person name="Gloeckner G."/>
            <person name="Gregory S.G."/>
            <person name="Gribble S."/>
            <person name="Griffiths C."/>
            <person name="Grocock R."/>
            <person name="Gu Y."/>
            <person name="Gwilliam R."/>
            <person name="Hamilton C."/>
            <person name="Hart E.A."/>
            <person name="Hawes A."/>
            <person name="Heath P.D."/>
            <person name="Heitmann K."/>
            <person name="Hennig S."/>
            <person name="Hernandez J."/>
            <person name="Hinzmann B."/>
            <person name="Ho S."/>
            <person name="Hoffs M."/>
            <person name="Howden P.J."/>
            <person name="Huckle E.J."/>
            <person name="Hume J."/>
            <person name="Hunt P.J."/>
            <person name="Hunt A.R."/>
            <person name="Isherwood J."/>
            <person name="Jacob L."/>
            <person name="Johnson D."/>
            <person name="Jones S."/>
            <person name="de Jong P.J."/>
            <person name="Joseph S.S."/>
            <person name="Keenan S."/>
            <person name="Kelly S."/>
            <person name="Kershaw J.K."/>
            <person name="Khan Z."/>
            <person name="Kioschis P."/>
            <person name="Klages S."/>
            <person name="Knights A.J."/>
            <person name="Kosiura A."/>
            <person name="Kovar-Smith C."/>
            <person name="Laird G.K."/>
            <person name="Langford C."/>
            <person name="Lawlor S."/>
            <person name="Leversha M."/>
            <person name="Lewis L."/>
            <person name="Liu W."/>
            <person name="Lloyd C."/>
            <person name="Lloyd D.M."/>
            <person name="Loulseged H."/>
            <person name="Loveland J.E."/>
            <person name="Lovell J.D."/>
            <person name="Lozado R."/>
            <person name="Lu J."/>
            <person name="Lyne R."/>
            <person name="Ma J."/>
            <person name="Maheshwari M."/>
            <person name="Matthews L.H."/>
            <person name="McDowall J."/>
            <person name="McLaren S."/>
            <person name="McMurray A."/>
            <person name="Meidl P."/>
            <person name="Meitinger T."/>
            <person name="Milne S."/>
            <person name="Miner G."/>
            <person name="Mistry S.L."/>
            <person name="Morgan M."/>
            <person name="Morris S."/>
            <person name="Mueller I."/>
            <person name="Mullikin J.C."/>
            <person name="Nguyen N."/>
            <person name="Nordsiek G."/>
            <person name="Nyakatura G."/>
            <person name="O'dell C.N."/>
            <person name="Okwuonu G."/>
            <person name="Palmer S."/>
            <person name="Pandian R."/>
            <person name="Parker D."/>
            <person name="Parrish J."/>
            <person name="Pasternak S."/>
            <person name="Patel D."/>
            <person name="Pearce A.V."/>
            <person name="Pearson D.M."/>
            <person name="Pelan S.E."/>
            <person name="Perez L."/>
            <person name="Porter K.M."/>
            <person name="Ramsey Y."/>
            <person name="Reichwald K."/>
            <person name="Rhodes S."/>
            <person name="Ridler K.A."/>
            <person name="Schlessinger D."/>
            <person name="Schueler M.G."/>
            <person name="Sehra H.K."/>
            <person name="Shaw-Smith C."/>
            <person name="Shen H."/>
            <person name="Sheridan E.M."/>
            <person name="Shownkeen R."/>
            <person name="Skuce C.D."/>
            <person name="Smith M.L."/>
            <person name="Sotheran E.C."/>
            <person name="Steingruber H.E."/>
            <person name="Steward C.A."/>
            <person name="Storey R."/>
            <person name="Swann R.M."/>
            <person name="Swarbreck D."/>
            <person name="Tabor P.E."/>
            <person name="Taudien S."/>
            <person name="Taylor T."/>
            <person name="Teague B."/>
            <person name="Thomas K."/>
            <person name="Thorpe A."/>
            <person name="Timms K."/>
            <person name="Tracey A."/>
            <person name="Trevanion S."/>
            <person name="Tromans A.C."/>
            <person name="d'Urso M."/>
            <person name="Verduzco D."/>
            <person name="Villasana D."/>
            <person name="Waldron L."/>
            <person name="Wall M."/>
            <person name="Wang Q."/>
            <person name="Warren J."/>
            <person name="Warry G.L."/>
            <person name="Wei X."/>
            <person name="West A."/>
            <person name="Whitehead S.L."/>
            <person name="Whiteley M.N."/>
            <person name="Wilkinson J.E."/>
            <person name="Willey D.L."/>
            <person name="Williams G."/>
            <person name="Williams L."/>
            <person name="Williamson A."/>
            <person name="Williamson H."/>
            <person name="Wilming L."/>
            <person name="Woodmansey R.L."/>
            <person name="Wray P.W."/>
            <person name="Yen J."/>
            <person name="Zhang J."/>
            <person name="Zhou J."/>
            <person name="Zoghbi H."/>
            <person name="Zorilla S."/>
            <person name="Buck D."/>
            <person name="Reinhardt R."/>
            <person name="Poustka A."/>
            <person name="Rosenthal A."/>
            <person name="Lehrach H."/>
            <person name="Meindl A."/>
            <person name="Minx P.J."/>
            <person name="Hillier L.W."/>
            <person name="Willard H.F."/>
            <person name="Wilson R.K."/>
            <person name="Waterston R.H."/>
            <person name="Rice C.M."/>
            <person name="Vaudin M."/>
            <person name="Coulson A."/>
            <person name="Nelson D.L."/>
            <person name="Weinstock G."/>
            <person name="Sulston J.E."/>
            <person name="Durbin R.M."/>
            <person name="Hubbard T."/>
            <person name="Gibbs R.A."/>
            <person name="Beck S."/>
            <person name="Rogers J."/>
            <person name="Bentley D.R."/>
        </authorList>
    </citation>
    <scope>NUCLEOTIDE SEQUENCE [LARGE SCALE GENOMIC DNA]</scope>
</reference>
<name>BM2KL_HUMAN</name>